<evidence type="ECO:0000255" key="1">
    <source>
        <dbReference type="HAMAP-Rule" id="MF_00031"/>
    </source>
</evidence>
<accession>B0BCE0</accession>
<organism>
    <name type="scientific">Chlamydia trachomatis serovar L2b (strain UCH-1/proctitis)</name>
    <dbReference type="NCBI Taxonomy" id="471473"/>
    <lineage>
        <taxon>Bacteria</taxon>
        <taxon>Pseudomonadati</taxon>
        <taxon>Chlamydiota</taxon>
        <taxon>Chlamydiia</taxon>
        <taxon>Chlamydiales</taxon>
        <taxon>Chlamydiaceae</taxon>
        <taxon>Chlamydia/Chlamydophila group</taxon>
        <taxon>Chlamydia</taxon>
    </lineage>
</organism>
<proteinExistence type="inferred from homology"/>
<comment type="function">
    <text evidence="1">The RuvA-RuvB-RuvC complex processes Holliday junction (HJ) DNA during genetic recombination and DNA repair, while the RuvA-RuvB complex plays an important role in the rescue of blocked DNA replication forks via replication fork reversal (RFR). RuvA specifically binds to HJ cruciform DNA, conferring on it an open structure. The RuvB hexamer acts as an ATP-dependent pump, pulling dsDNA into and through the RuvAB complex. HJ branch migration allows RuvC to scan DNA until it finds its consensus sequence, where it cleaves and resolves the cruciform DNA.</text>
</comment>
<comment type="subunit">
    <text evidence="1">Homotetramer. Forms an RuvA(8)-RuvB(12)-Holliday junction (HJ) complex. HJ DNA is sandwiched between 2 RuvA tetramers; dsDNA enters through RuvA and exits via RuvB. An RuvB hexamer assembles on each DNA strand where it exits the tetramer. Each RuvB hexamer is contacted by two RuvA subunits (via domain III) on 2 adjacent RuvB subunits; this complex drives branch migration. In the full resolvosome a probable DNA-RuvA(4)-RuvB(12)-RuvC(2) complex forms which resolves the HJ.</text>
</comment>
<comment type="subcellular location">
    <subcellularLocation>
        <location evidence="1">Cytoplasm</location>
    </subcellularLocation>
</comment>
<comment type="domain">
    <text evidence="1">Has three domains with a flexible linker between the domains II and III and assumes an 'L' shape. Domain III is highly mobile and contacts RuvB.</text>
</comment>
<comment type="similarity">
    <text evidence="1">Belongs to the RuvA family.</text>
</comment>
<protein>
    <recommendedName>
        <fullName evidence="1">Holliday junction branch migration complex subunit RuvA</fullName>
    </recommendedName>
</protein>
<dbReference type="EMBL" id="AM884177">
    <property type="protein sequence ID" value="CAP07155.1"/>
    <property type="molecule type" value="Genomic_DNA"/>
</dbReference>
<dbReference type="RefSeq" id="WP_009873862.1">
    <property type="nucleotide sequence ID" value="NC_010280.2"/>
</dbReference>
<dbReference type="SMR" id="B0BCE0"/>
<dbReference type="KEGG" id="ctl:CTLon_0758"/>
<dbReference type="HOGENOM" id="CLU_087936_3_0_0"/>
<dbReference type="Proteomes" id="UP001154401">
    <property type="component" value="Chromosome"/>
</dbReference>
<dbReference type="GO" id="GO:0005737">
    <property type="term" value="C:cytoplasm"/>
    <property type="evidence" value="ECO:0007669"/>
    <property type="project" value="UniProtKB-SubCell"/>
</dbReference>
<dbReference type="GO" id="GO:0009379">
    <property type="term" value="C:Holliday junction helicase complex"/>
    <property type="evidence" value="ECO:0007669"/>
    <property type="project" value="InterPro"/>
</dbReference>
<dbReference type="GO" id="GO:0048476">
    <property type="term" value="C:Holliday junction resolvase complex"/>
    <property type="evidence" value="ECO:0007669"/>
    <property type="project" value="UniProtKB-UniRule"/>
</dbReference>
<dbReference type="GO" id="GO:0005524">
    <property type="term" value="F:ATP binding"/>
    <property type="evidence" value="ECO:0007669"/>
    <property type="project" value="InterPro"/>
</dbReference>
<dbReference type="GO" id="GO:0000400">
    <property type="term" value="F:four-way junction DNA binding"/>
    <property type="evidence" value="ECO:0007669"/>
    <property type="project" value="UniProtKB-UniRule"/>
</dbReference>
<dbReference type="GO" id="GO:0009378">
    <property type="term" value="F:four-way junction helicase activity"/>
    <property type="evidence" value="ECO:0007669"/>
    <property type="project" value="InterPro"/>
</dbReference>
<dbReference type="GO" id="GO:0006310">
    <property type="term" value="P:DNA recombination"/>
    <property type="evidence" value="ECO:0007669"/>
    <property type="project" value="UniProtKB-UniRule"/>
</dbReference>
<dbReference type="GO" id="GO:0006281">
    <property type="term" value="P:DNA repair"/>
    <property type="evidence" value="ECO:0007669"/>
    <property type="project" value="UniProtKB-UniRule"/>
</dbReference>
<dbReference type="CDD" id="cd14332">
    <property type="entry name" value="UBA_RuvA_C"/>
    <property type="match status" value="1"/>
</dbReference>
<dbReference type="Gene3D" id="1.10.150.20">
    <property type="entry name" value="5' to 3' exonuclease, C-terminal subdomain"/>
    <property type="match status" value="1"/>
</dbReference>
<dbReference type="Gene3D" id="1.10.8.10">
    <property type="entry name" value="DNA helicase RuvA subunit, C-terminal domain"/>
    <property type="match status" value="1"/>
</dbReference>
<dbReference type="Gene3D" id="2.40.50.140">
    <property type="entry name" value="Nucleic acid-binding proteins"/>
    <property type="match status" value="1"/>
</dbReference>
<dbReference type="HAMAP" id="MF_00031">
    <property type="entry name" value="DNA_HJ_migration_RuvA"/>
    <property type="match status" value="1"/>
</dbReference>
<dbReference type="InterPro" id="IPR013849">
    <property type="entry name" value="DNA_helicase_Holl-junc_RuvA_I"/>
</dbReference>
<dbReference type="InterPro" id="IPR003583">
    <property type="entry name" value="Hlx-hairpin-Hlx_DNA-bd_motif"/>
</dbReference>
<dbReference type="InterPro" id="IPR012340">
    <property type="entry name" value="NA-bd_OB-fold"/>
</dbReference>
<dbReference type="InterPro" id="IPR000085">
    <property type="entry name" value="RuvA"/>
</dbReference>
<dbReference type="InterPro" id="IPR010994">
    <property type="entry name" value="RuvA_2-like"/>
</dbReference>
<dbReference type="InterPro" id="IPR011114">
    <property type="entry name" value="RuvA_C"/>
</dbReference>
<dbReference type="NCBIfam" id="TIGR00084">
    <property type="entry name" value="ruvA"/>
    <property type="match status" value="1"/>
</dbReference>
<dbReference type="Pfam" id="PF14520">
    <property type="entry name" value="HHH_5"/>
    <property type="match status" value="1"/>
</dbReference>
<dbReference type="Pfam" id="PF01330">
    <property type="entry name" value="RuvA_N"/>
    <property type="match status" value="1"/>
</dbReference>
<dbReference type="SMART" id="SM00278">
    <property type="entry name" value="HhH1"/>
    <property type="match status" value="2"/>
</dbReference>
<dbReference type="SUPFAM" id="SSF50249">
    <property type="entry name" value="Nucleic acid-binding proteins"/>
    <property type="match status" value="1"/>
</dbReference>
<dbReference type="SUPFAM" id="SSF47781">
    <property type="entry name" value="RuvA domain 2-like"/>
    <property type="match status" value="1"/>
</dbReference>
<feature type="chain" id="PRO_1000090301" description="Holliday junction branch migration complex subunit RuvA">
    <location>
        <begin position="1"/>
        <end position="200"/>
    </location>
</feature>
<feature type="region of interest" description="Domain I" evidence="1">
    <location>
        <begin position="1"/>
        <end position="65"/>
    </location>
</feature>
<feature type="region of interest" description="Domain II" evidence="1">
    <location>
        <begin position="66"/>
        <end position="144"/>
    </location>
</feature>
<feature type="region of interest" description="Flexible linker" evidence="1">
    <location>
        <begin position="145"/>
        <end position="149"/>
    </location>
</feature>
<feature type="region of interest" description="Domain III" evidence="1">
    <location>
        <begin position="150"/>
        <end position="200"/>
    </location>
</feature>
<sequence>MYEYIKGTLTHIDGSYVVIESFGIGYAIMLSERFLVDLRAFMHQEVLIYVHSVIRETEHVLYGFSSRAERECFRLLISFSGIGPKTGLSILNMFPLQELCSIARLENVKAIASVPGIGKKTAEKLMVDLKQKLPTLMPLYLEEPVVPSSTANSSFKEGIGALMNLGFSRLAADRMMTEAVKELSEEASVAELLPIALRKS</sequence>
<gene>
    <name evidence="1" type="primary">ruvA</name>
    <name type="ordered locus">CTLon_0758</name>
</gene>
<name>RUVA_CHLTB</name>
<reference key="1">
    <citation type="journal article" date="2008" name="Genome Res.">
        <title>Chlamydia trachomatis: genome sequence analysis of lymphogranuloma venereum isolates.</title>
        <authorList>
            <person name="Thomson N.R."/>
            <person name="Holden M.T.G."/>
            <person name="Carder C."/>
            <person name="Lennard N."/>
            <person name="Lockey S.J."/>
            <person name="Marsh P."/>
            <person name="Skipp P."/>
            <person name="O'Connor C.D."/>
            <person name="Goodhead I."/>
            <person name="Norbertzcak H."/>
            <person name="Harris B."/>
            <person name="Ormond D."/>
            <person name="Rance R."/>
            <person name="Quail M.A."/>
            <person name="Parkhill J."/>
            <person name="Stephens R.S."/>
            <person name="Clarke I.N."/>
        </authorList>
    </citation>
    <scope>NUCLEOTIDE SEQUENCE [LARGE SCALE GENOMIC DNA]</scope>
    <source>
        <strain>UCH-1/proctitis</strain>
    </source>
</reference>
<keyword id="KW-0963">Cytoplasm</keyword>
<keyword id="KW-0227">DNA damage</keyword>
<keyword id="KW-0233">DNA recombination</keyword>
<keyword id="KW-0234">DNA repair</keyword>
<keyword id="KW-0238">DNA-binding</keyword>